<reference key="1">
    <citation type="journal article" date="2000" name="Nature">
        <title>DNA sequence of both chromosomes of the cholera pathogen Vibrio cholerae.</title>
        <authorList>
            <person name="Heidelberg J.F."/>
            <person name="Eisen J.A."/>
            <person name="Nelson W.C."/>
            <person name="Clayton R.A."/>
            <person name="Gwinn M.L."/>
            <person name="Dodson R.J."/>
            <person name="Haft D.H."/>
            <person name="Hickey E.K."/>
            <person name="Peterson J.D."/>
            <person name="Umayam L.A."/>
            <person name="Gill S.R."/>
            <person name="Nelson K.E."/>
            <person name="Read T.D."/>
            <person name="Tettelin H."/>
            <person name="Richardson D.L."/>
            <person name="Ermolaeva M.D."/>
            <person name="Vamathevan J.J."/>
            <person name="Bass S."/>
            <person name="Qin H."/>
            <person name="Dragoi I."/>
            <person name="Sellers P."/>
            <person name="McDonald L.A."/>
            <person name="Utterback T.R."/>
            <person name="Fleischmann R.D."/>
            <person name="Nierman W.C."/>
            <person name="White O."/>
            <person name="Salzberg S.L."/>
            <person name="Smith H.O."/>
            <person name="Colwell R.R."/>
            <person name="Mekalanos J.J."/>
            <person name="Venter J.C."/>
            <person name="Fraser C.M."/>
        </authorList>
    </citation>
    <scope>NUCLEOTIDE SEQUENCE [LARGE SCALE GENOMIC DNA]</scope>
    <source>
        <strain>ATCC 39315 / El Tor Inaba N16961</strain>
    </source>
</reference>
<comment type="subcellular location">
    <subcellularLocation>
        <location evidence="1">Cell inner membrane</location>
        <topology evidence="1">Multi-pass membrane protein</topology>
    </subcellularLocation>
</comment>
<comment type="similarity">
    <text evidence="1">Belongs to the UPF0761 family.</text>
</comment>
<proteinExistence type="inferred from homology"/>
<sequence length="297" mass="33286">MKLTHSFIKQQARLGLNFFRYLLARMNHDRVNVNAGYLAYITLLSMVPMLTVLLSILSSFALFANAGEVIQDFVITHFVPAAGEVVKTALIEFVANTGKMTAVGGAFLFVAAIMLISNIDKNLNYIWRVQQKRRAVFSFSMYWMILTLGPILVGASIAATSYITSLKILDNEALSGVYNLFLRWLPFVLSYCAFVGLYLLVPNKKVHWQHAMLGALIAAILFELSKKGFAAYITQFPSYQLIYGALAAIPILFVWVYLCWLIVLVGAEVTAALGEREHWSDSQDMLHFAPLPKNEKE</sequence>
<keyword id="KW-0997">Cell inner membrane</keyword>
<keyword id="KW-1003">Cell membrane</keyword>
<keyword id="KW-0472">Membrane</keyword>
<keyword id="KW-1185">Reference proteome</keyword>
<keyword id="KW-0812">Transmembrane</keyword>
<keyword id="KW-1133">Transmembrane helix</keyword>
<protein>
    <recommendedName>
        <fullName evidence="1">UPF0761 membrane protein VC_2742</fullName>
    </recommendedName>
</protein>
<organism>
    <name type="scientific">Vibrio cholerae serotype O1 (strain ATCC 39315 / El Tor Inaba N16961)</name>
    <dbReference type="NCBI Taxonomy" id="243277"/>
    <lineage>
        <taxon>Bacteria</taxon>
        <taxon>Pseudomonadati</taxon>
        <taxon>Pseudomonadota</taxon>
        <taxon>Gammaproteobacteria</taxon>
        <taxon>Vibrionales</taxon>
        <taxon>Vibrionaceae</taxon>
        <taxon>Vibrio</taxon>
    </lineage>
</organism>
<evidence type="ECO:0000255" key="1">
    <source>
        <dbReference type="HAMAP-Rule" id="MF_00672"/>
    </source>
</evidence>
<feature type="chain" id="PRO_0000200998" description="UPF0761 membrane protein VC_2742">
    <location>
        <begin position="1"/>
        <end position="297"/>
    </location>
</feature>
<feature type="transmembrane region" description="Helical" evidence="1">
    <location>
        <begin position="43"/>
        <end position="63"/>
    </location>
</feature>
<feature type="transmembrane region" description="Helical" evidence="1">
    <location>
        <begin position="100"/>
        <end position="120"/>
    </location>
</feature>
<feature type="transmembrane region" description="Helical" evidence="1">
    <location>
        <begin position="135"/>
        <end position="155"/>
    </location>
</feature>
<feature type="transmembrane region" description="Helical" evidence="1">
    <location>
        <begin position="181"/>
        <end position="201"/>
    </location>
</feature>
<feature type="transmembrane region" description="Helical" evidence="1">
    <location>
        <begin position="213"/>
        <end position="233"/>
    </location>
</feature>
<feature type="transmembrane region" description="Helical" evidence="1">
    <location>
        <begin position="245"/>
        <end position="265"/>
    </location>
</feature>
<name>Y2742_VIBCH</name>
<accession>Q9KNJ6</accession>
<dbReference type="EMBL" id="AE003852">
    <property type="protein sequence ID" value="AAF95881.1"/>
    <property type="molecule type" value="Genomic_DNA"/>
</dbReference>
<dbReference type="PIR" id="F82039">
    <property type="entry name" value="F82039"/>
</dbReference>
<dbReference type="RefSeq" id="NP_232368.1">
    <property type="nucleotide sequence ID" value="NC_002505.1"/>
</dbReference>
<dbReference type="RefSeq" id="WP_001884068.1">
    <property type="nucleotide sequence ID" value="NZ_LT906614.1"/>
</dbReference>
<dbReference type="STRING" id="243277.VC_2742"/>
<dbReference type="DNASU" id="2614905"/>
<dbReference type="EnsemblBacteria" id="AAF95881">
    <property type="protein sequence ID" value="AAF95881"/>
    <property type="gene ID" value="VC_2742"/>
</dbReference>
<dbReference type="KEGG" id="vch:VC_2742"/>
<dbReference type="PATRIC" id="fig|243277.26.peg.2617"/>
<dbReference type="eggNOG" id="COG1295">
    <property type="taxonomic scope" value="Bacteria"/>
</dbReference>
<dbReference type="HOGENOM" id="CLU_032288_0_0_6"/>
<dbReference type="Proteomes" id="UP000000584">
    <property type="component" value="Chromosome 1"/>
</dbReference>
<dbReference type="GO" id="GO:0005886">
    <property type="term" value="C:plasma membrane"/>
    <property type="evidence" value="ECO:0000318"/>
    <property type="project" value="GO_Central"/>
</dbReference>
<dbReference type="HAMAP" id="MF_00672">
    <property type="entry name" value="UPF0761"/>
    <property type="match status" value="1"/>
</dbReference>
<dbReference type="InterPro" id="IPR023679">
    <property type="entry name" value="UPF0761_bac"/>
</dbReference>
<dbReference type="InterPro" id="IPR017039">
    <property type="entry name" value="Virul_fac_BrkB"/>
</dbReference>
<dbReference type="NCBIfam" id="NF002457">
    <property type="entry name" value="PRK01637.1"/>
    <property type="match status" value="1"/>
</dbReference>
<dbReference type="NCBIfam" id="TIGR00765">
    <property type="entry name" value="yihY_not_rbn"/>
    <property type="match status" value="1"/>
</dbReference>
<dbReference type="PANTHER" id="PTHR30213">
    <property type="entry name" value="INNER MEMBRANE PROTEIN YHJD"/>
    <property type="match status" value="1"/>
</dbReference>
<dbReference type="PANTHER" id="PTHR30213:SF0">
    <property type="entry name" value="UPF0761 MEMBRANE PROTEIN YIHY"/>
    <property type="match status" value="1"/>
</dbReference>
<dbReference type="Pfam" id="PF03631">
    <property type="entry name" value="Virul_fac_BrkB"/>
    <property type="match status" value="1"/>
</dbReference>
<dbReference type="PIRSF" id="PIRSF035875">
    <property type="entry name" value="RNase_BN"/>
    <property type="match status" value="1"/>
</dbReference>
<gene>
    <name type="ordered locus">VC_2742</name>
</gene>